<gene>
    <name evidence="1" type="primary">macB1</name>
    <name type="ordered locus">Ecok1_07630</name>
    <name type="ORF">APECO1_1215</name>
</gene>
<keyword id="KW-0046">Antibiotic resistance</keyword>
<keyword id="KW-0067">ATP-binding</keyword>
<keyword id="KW-0997">Cell inner membrane</keyword>
<keyword id="KW-1003">Cell membrane</keyword>
<keyword id="KW-0472">Membrane</keyword>
<keyword id="KW-0547">Nucleotide-binding</keyword>
<keyword id="KW-1185">Reference proteome</keyword>
<keyword id="KW-1278">Translocase</keyword>
<keyword id="KW-0812">Transmembrane</keyword>
<keyword id="KW-1133">Transmembrane helix</keyword>
<keyword id="KW-0813">Transport</keyword>
<sequence>MTPLLELKDIRRSYPAGDEQVEVLKGISLDIYAGEMVAIVGASGSGKSTLMNILGCLDKATSGTYRVAGQDVATLDADALAQLRREHFGFIFQRYHLLSHLTAEQNVEVPAVYAGLERKQRLLRAQELLQRLGLEDRTEYYPAQLSGGQQQRVSIARALMNGGQVILADEPTGALDSHSGEEVMAILHQLRDRGHTVIIVTHDPQVAAQAERVIEIRDGEIVRNPPAVEKVNATGGTEPVVNTASGWRQFVSGFNEALTMAWRALAANKMRTLLTMLGIIIGIASVVSIVVVGDAAKQMVLADIRSIGTNTIDVYPGKDFGDDDPQYQQALKYDDLIAIQKQPWVASATPAVSQNLRLRYNNVDVAASANGVSGDYFNVYGMTFSEGNTFNQEQLNGRAQVVVLDSNTRRQLFPHKADVVGEVILVGNMPARVIGVAEEKQSMFGSSKVLRVWLPYSTMSGRVMGQSWLNSITVRVKEGFDSAEAEQQLTRLLSLRHGKKDFFTWNMDGVLKTVEKTTRTLQLFLTLVAVISLVVGGIGVMNIMLVSVTERTREIGIRMAVGARASDVLQQFLIEAVLVCLVGGALGITLSLLIAFTLQLFLPGWEIGFSPLALLLAFLCSTVTGILFGWLPARNAARLDPVDALARE</sequence>
<name>MACB1_ECOK1</name>
<evidence type="ECO:0000255" key="1">
    <source>
        <dbReference type="HAMAP-Rule" id="MF_01720"/>
    </source>
</evidence>
<dbReference type="EC" id="7.6.2.-" evidence="1"/>
<dbReference type="EMBL" id="CP000468">
    <property type="protein sequence ID" value="ABJ00257.1"/>
    <property type="molecule type" value="Genomic_DNA"/>
</dbReference>
<dbReference type="SMR" id="A1A9B7"/>
<dbReference type="KEGG" id="ecv:APECO1_1215"/>
<dbReference type="HOGENOM" id="CLU_000604_78_2_6"/>
<dbReference type="Proteomes" id="UP000008216">
    <property type="component" value="Chromosome"/>
</dbReference>
<dbReference type="GO" id="GO:0005886">
    <property type="term" value="C:plasma membrane"/>
    <property type="evidence" value="ECO:0007669"/>
    <property type="project" value="UniProtKB-SubCell"/>
</dbReference>
<dbReference type="GO" id="GO:0005524">
    <property type="term" value="F:ATP binding"/>
    <property type="evidence" value="ECO:0007669"/>
    <property type="project" value="UniProtKB-KW"/>
</dbReference>
<dbReference type="GO" id="GO:0016887">
    <property type="term" value="F:ATP hydrolysis activity"/>
    <property type="evidence" value="ECO:0007669"/>
    <property type="project" value="InterPro"/>
</dbReference>
<dbReference type="GO" id="GO:0022857">
    <property type="term" value="F:transmembrane transporter activity"/>
    <property type="evidence" value="ECO:0007669"/>
    <property type="project" value="TreeGrafter"/>
</dbReference>
<dbReference type="GO" id="GO:0046677">
    <property type="term" value="P:response to antibiotic"/>
    <property type="evidence" value="ECO:0007669"/>
    <property type="project" value="UniProtKB-KW"/>
</dbReference>
<dbReference type="CDD" id="cd03255">
    <property type="entry name" value="ABC_MJ0796_LolCDE_FtsE"/>
    <property type="match status" value="1"/>
</dbReference>
<dbReference type="FunFam" id="3.40.50.300:FF:000032">
    <property type="entry name" value="Export ABC transporter ATP-binding protein"/>
    <property type="match status" value="1"/>
</dbReference>
<dbReference type="Gene3D" id="3.40.50.300">
    <property type="entry name" value="P-loop containing nucleotide triphosphate hydrolases"/>
    <property type="match status" value="1"/>
</dbReference>
<dbReference type="InterPro" id="IPR003593">
    <property type="entry name" value="AAA+_ATPase"/>
</dbReference>
<dbReference type="InterPro" id="IPR003838">
    <property type="entry name" value="ABC3_permease_C"/>
</dbReference>
<dbReference type="InterPro" id="IPR003439">
    <property type="entry name" value="ABC_transporter-like_ATP-bd"/>
</dbReference>
<dbReference type="InterPro" id="IPR017871">
    <property type="entry name" value="ABC_transporter-like_CS"/>
</dbReference>
<dbReference type="InterPro" id="IPR017911">
    <property type="entry name" value="MacB-like_ATP-bd"/>
</dbReference>
<dbReference type="InterPro" id="IPR025857">
    <property type="entry name" value="MacB_PCD"/>
</dbReference>
<dbReference type="InterPro" id="IPR050250">
    <property type="entry name" value="Macrolide_Exporter_MacB"/>
</dbReference>
<dbReference type="InterPro" id="IPR027417">
    <property type="entry name" value="P-loop_NTPase"/>
</dbReference>
<dbReference type="NCBIfam" id="NF007826">
    <property type="entry name" value="PRK10535.1"/>
    <property type="match status" value="1"/>
</dbReference>
<dbReference type="PANTHER" id="PTHR30572:SF7">
    <property type="entry name" value="MACROLIDE EXPORT ATP-BINDING_PERMEASE PROTEIN MACB"/>
    <property type="match status" value="1"/>
</dbReference>
<dbReference type="PANTHER" id="PTHR30572">
    <property type="entry name" value="MEMBRANE COMPONENT OF TRANSPORTER-RELATED"/>
    <property type="match status" value="1"/>
</dbReference>
<dbReference type="Pfam" id="PF00005">
    <property type="entry name" value="ABC_tran"/>
    <property type="match status" value="1"/>
</dbReference>
<dbReference type="Pfam" id="PF02687">
    <property type="entry name" value="FtsX"/>
    <property type="match status" value="1"/>
</dbReference>
<dbReference type="Pfam" id="PF12704">
    <property type="entry name" value="MacB_PCD"/>
    <property type="match status" value="1"/>
</dbReference>
<dbReference type="SMART" id="SM00382">
    <property type="entry name" value="AAA"/>
    <property type="match status" value="1"/>
</dbReference>
<dbReference type="SUPFAM" id="SSF52540">
    <property type="entry name" value="P-loop containing nucleoside triphosphate hydrolases"/>
    <property type="match status" value="1"/>
</dbReference>
<dbReference type="PROSITE" id="PS00211">
    <property type="entry name" value="ABC_TRANSPORTER_1"/>
    <property type="match status" value="1"/>
</dbReference>
<dbReference type="PROSITE" id="PS50893">
    <property type="entry name" value="ABC_TRANSPORTER_2"/>
    <property type="match status" value="1"/>
</dbReference>
<dbReference type="PROSITE" id="PS51267">
    <property type="entry name" value="MACB"/>
    <property type="match status" value="1"/>
</dbReference>
<feature type="chain" id="PRO_0000280167" description="Macrolide export ATP-binding/permease protein MacB 1">
    <location>
        <begin position="1"/>
        <end position="648"/>
    </location>
</feature>
<feature type="transmembrane region" description="Helical" evidence="1">
    <location>
        <begin position="273"/>
        <end position="293"/>
    </location>
</feature>
<feature type="transmembrane region" description="Helical" evidence="1">
    <location>
        <begin position="523"/>
        <end position="543"/>
    </location>
</feature>
<feature type="transmembrane region" description="Helical" evidence="1">
    <location>
        <begin position="576"/>
        <end position="596"/>
    </location>
</feature>
<feature type="transmembrane region" description="Helical" evidence="1">
    <location>
        <begin position="611"/>
        <end position="631"/>
    </location>
</feature>
<feature type="domain" description="ABC transporter" evidence="1">
    <location>
        <begin position="5"/>
        <end position="243"/>
    </location>
</feature>
<feature type="binding site" evidence="1">
    <location>
        <begin position="41"/>
        <end position="48"/>
    </location>
    <ligand>
        <name>ATP</name>
        <dbReference type="ChEBI" id="CHEBI:30616"/>
    </ligand>
</feature>
<organism>
    <name type="scientific">Escherichia coli O1:K1 / APEC</name>
    <dbReference type="NCBI Taxonomy" id="405955"/>
    <lineage>
        <taxon>Bacteria</taxon>
        <taxon>Pseudomonadati</taxon>
        <taxon>Pseudomonadota</taxon>
        <taxon>Gammaproteobacteria</taxon>
        <taxon>Enterobacterales</taxon>
        <taxon>Enterobacteriaceae</taxon>
        <taxon>Escherichia</taxon>
    </lineage>
</organism>
<protein>
    <recommendedName>
        <fullName evidence="1">Macrolide export ATP-binding/permease protein MacB 1</fullName>
        <ecNumber evidence="1">7.6.2.-</ecNumber>
    </recommendedName>
</protein>
<comment type="function">
    <text evidence="1">Part of the tripartite efflux system MacAB-TolC. MacB is a non-canonical ABC transporter that contains transmembrane domains (TMD), which form a pore in the inner membrane, and an ATP-binding domain (NBD), which is responsible for energy generation. Confers resistance against macrolides.</text>
</comment>
<comment type="subunit">
    <text evidence="1">Homodimer. Part of the tripartite efflux system MacAB-TolC, which is composed of an inner membrane transporter, MacB, a periplasmic membrane fusion protein, MacA, and an outer membrane component, TolC. The complex forms a large protein conduit and can translocate molecules across both the inner and outer membranes. Interacts with MacA.</text>
</comment>
<comment type="subcellular location">
    <subcellularLocation>
        <location evidence="1">Cell inner membrane</location>
        <topology evidence="1">Multi-pass membrane protein</topology>
    </subcellularLocation>
</comment>
<comment type="similarity">
    <text evidence="1">Belongs to the ABC transporter superfamily. Macrolide exporter (TC 3.A.1.122) family.</text>
</comment>
<proteinExistence type="inferred from homology"/>
<accession>A1A9B7</accession>
<reference key="1">
    <citation type="journal article" date="2007" name="J. Bacteriol.">
        <title>The genome sequence of avian pathogenic Escherichia coli strain O1:K1:H7 shares strong similarities with human extraintestinal pathogenic E. coli genomes.</title>
        <authorList>
            <person name="Johnson T.J."/>
            <person name="Kariyawasam S."/>
            <person name="Wannemuehler Y."/>
            <person name="Mangiamele P."/>
            <person name="Johnson S.J."/>
            <person name="Doetkott C."/>
            <person name="Skyberg J.A."/>
            <person name="Lynne A.M."/>
            <person name="Johnson J.R."/>
            <person name="Nolan L.K."/>
        </authorList>
    </citation>
    <scope>NUCLEOTIDE SEQUENCE [LARGE SCALE GENOMIC DNA]</scope>
</reference>